<protein>
    <recommendedName>
        <fullName evidence="2">Eukaryotic translation initiation factor 3 subunit H</fullName>
        <shortName evidence="2">eIF3h</shortName>
    </recommendedName>
    <alternativeName>
        <fullName evidence="2">Eukaryotic translation initiation factor 3 subunit 3</fullName>
    </alternativeName>
</protein>
<reference key="1">
    <citation type="journal article" date="2007" name="Nature">
        <title>Evolution of genes and genomes on the Drosophila phylogeny.</title>
        <authorList>
            <consortium name="Drosophila 12 genomes consortium"/>
        </authorList>
    </citation>
    <scope>NUCLEOTIDE SEQUENCE [LARGE SCALE GENOMIC DNA]</scope>
    <source>
        <strain>Tucson 15010-1051.87</strain>
    </source>
</reference>
<sequence>MANRGARHARTEDSDNTINYVQCDGLAVMKMVKHCHEESSNMDLAQGALLGLVVDKCLEITNCFPFPKSGDETMDEEMYQLTVMRRLRRVNVDHLHVGWYQSSDVGNSLSLALLESQYHYQTSIEESVVVVYDTQKSSRGFLCLKAYRLTPQAIQMYKDGDFTPEAFRTLKVGYESLFAEIPIVIKNSPLTNIMMSELNELLPEDKGHNFLDLGTASVLENHMRSLIERVDELYQEAVRYNKYQQVVFKQDTEKHRALAKLAAENAVRTSKGEPTVPEEEVIKQFRPMPVPARLTATITSGQINTHAQHIAQFCSQSLAKLFITESLQNAKETKEIK</sequence>
<accession>B4LTW0</accession>
<gene>
    <name evidence="2" type="primary">eIF-3p40</name>
    <name evidence="2" type="synonym">eif3-S3</name>
    <name type="ORF">GJ10133</name>
</gene>
<organism>
    <name type="scientific">Drosophila virilis</name>
    <name type="common">Fruit fly</name>
    <dbReference type="NCBI Taxonomy" id="7244"/>
    <lineage>
        <taxon>Eukaryota</taxon>
        <taxon>Metazoa</taxon>
        <taxon>Ecdysozoa</taxon>
        <taxon>Arthropoda</taxon>
        <taxon>Hexapoda</taxon>
        <taxon>Insecta</taxon>
        <taxon>Pterygota</taxon>
        <taxon>Neoptera</taxon>
        <taxon>Endopterygota</taxon>
        <taxon>Diptera</taxon>
        <taxon>Brachycera</taxon>
        <taxon>Muscomorpha</taxon>
        <taxon>Ephydroidea</taxon>
        <taxon>Drosophilidae</taxon>
        <taxon>Drosophila</taxon>
    </lineage>
</organism>
<feature type="chain" id="PRO_0000365192" description="Eukaryotic translation initiation factor 3 subunit H">
    <location>
        <begin position="1"/>
        <end position="337"/>
    </location>
</feature>
<feature type="domain" description="MPN" evidence="3">
    <location>
        <begin position="21"/>
        <end position="153"/>
    </location>
</feature>
<comment type="function">
    <text evidence="2">Component of the eukaryotic translation initiation factor 3 (eIF-3) complex, which is involved in protein synthesis of a specialized repertoire of mRNAs and, together with other initiation factors, stimulates binding of mRNA and methionyl-tRNAi to the 40S ribosome. The eIF-3 complex specifically targets and initiates translation of a subset of mRNAs involved in cell proliferation.</text>
</comment>
<comment type="subunit">
    <text evidence="1 2">Component of the eukaryotic translation initiation factor 3 (eIF-3) complex. The eIF-3 complex interacts with pix. Interacts with mxt (By similarity).</text>
</comment>
<comment type="subcellular location">
    <subcellularLocation>
        <location evidence="2">Cytoplasm</location>
    </subcellularLocation>
</comment>
<comment type="similarity">
    <text evidence="2">Belongs to the eIF-3 subunit H family.</text>
</comment>
<evidence type="ECO:0000250" key="1">
    <source>
        <dbReference type="UniProtKB" id="Q9U9Q4"/>
    </source>
</evidence>
<evidence type="ECO:0000255" key="2">
    <source>
        <dbReference type="HAMAP-Rule" id="MF_03007"/>
    </source>
</evidence>
<evidence type="ECO:0000255" key="3">
    <source>
        <dbReference type="PROSITE-ProRule" id="PRU01182"/>
    </source>
</evidence>
<name>EIF3H_DROVI</name>
<keyword id="KW-0963">Cytoplasm</keyword>
<keyword id="KW-0396">Initiation factor</keyword>
<keyword id="KW-0648">Protein biosynthesis</keyword>
<keyword id="KW-1185">Reference proteome</keyword>
<proteinExistence type="inferred from homology"/>
<dbReference type="EMBL" id="CH940649">
    <property type="protein sequence ID" value="EDW64011.1"/>
    <property type="molecule type" value="Genomic_DNA"/>
</dbReference>
<dbReference type="SMR" id="B4LTW0"/>
<dbReference type="FunCoup" id="B4LTW0">
    <property type="interactions" value="2273"/>
</dbReference>
<dbReference type="STRING" id="7244.B4LTW0"/>
<dbReference type="MEROPS" id="M67.971"/>
<dbReference type="EnsemblMetazoa" id="FBtr0226058">
    <property type="protein sequence ID" value="FBpp0224550"/>
    <property type="gene ID" value="FBgn0197421"/>
</dbReference>
<dbReference type="EnsemblMetazoa" id="XM_002051820.3">
    <property type="protein sequence ID" value="XP_002051856.1"/>
    <property type="gene ID" value="LOC6628544"/>
</dbReference>
<dbReference type="GeneID" id="6628544"/>
<dbReference type="KEGG" id="dvi:6628544"/>
<dbReference type="CTD" id="8667"/>
<dbReference type="eggNOG" id="KOG1560">
    <property type="taxonomic scope" value="Eukaryota"/>
</dbReference>
<dbReference type="HOGENOM" id="CLU_044094_0_0_1"/>
<dbReference type="InParanoid" id="B4LTW0"/>
<dbReference type="OMA" id="WYQSTYF"/>
<dbReference type="OrthoDB" id="10265695at2759"/>
<dbReference type="PhylomeDB" id="B4LTW0"/>
<dbReference type="ChiTaRS" id="eIF-3p40">
    <property type="organism name" value="fly"/>
</dbReference>
<dbReference type="Proteomes" id="UP000008792">
    <property type="component" value="Unassembled WGS sequence"/>
</dbReference>
<dbReference type="GO" id="GO:0016282">
    <property type="term" value="C:eukaryotic 43S preinitiation complex"/>
    <property type="evidence" value="ECO:0007669"/>
    <property type="project" value="UniProtKB-UniRule"/>
</dbReference>
<dbReference type="GO" id="GO:0033290">
    <property type="term" value="C:eukaryotic 48S preinitiation complex"/>
    <property type="evidence" value="ECO:0007669"/>
    <property type="project" value="UniProtKB-UniRule"/>
</dbReference>
<dbReference type="GO" id="GO:0005852">
    <property type="term" value="C:eukaryotic translation initiation factor 3 complex"/>
    <property type="evidence" value="ECO:0007669"/>
    <property type="project" value="UniProtKB-UniRule"/>
</dbReference>
<dbReference type="GO" id="GO:0008237">
    <property type="term" value="F:metallopeptidase activity"/>
    <property type="evidence" value="ECO:0007669"/>
    <property type="project" value="InterPro"/>
</dbReference>
<dbReference type="GO" id="GO:0003743">
    <property type="term" value="F:translation initiation factor activity"/>
    <property type="evidence" value="ECO:0007669"/>
    <property type="project" value="UniProtKB-UniRule"/>
</dbReference>
<dbReference type="GO" id="GO:0001732">
    <property type="term" value="P:formation of cytoplasmic translation initiation complex"/>
    <property type="evidence" value="ECO:0007669"/>
    <property type="project" value="UniProtKB-UniRule"/>
</dbReference>
<dbReference type="GO" id="GO:0045747">
    <property type="term" value="P:positive regulation of Notch signaling pathway"/>
    <property type="evidence" value="ECO:0007669"/>
    <property type="project" value="EnsemblMetazoa"/>
</dbReference>
<dbReference type="CDD" id="cd08065">
    <property type="entry name" value="MPN_eIF3h"/>
    <property type="match status" value="1"/>
</dbReference>
<dbReference type="FunFam" id="3.40.140.10:FF:000045">
    <property type="entry name" value="Eukaryotic translation initiation factor 3 subunit H"/>
    <property type="match status" value="1"/>
</dbReference>
<dbReference type="Gene3D" id="3.40.140.10">
    <property type="entry name" value="Cytidine Deaminase, domain 2"/>
    <property type="match status" value="1"/>
</dbReference>
<dbReference type="HAMAP" id="MF_03007">
    <property type="entry name" value="eIF3h"/>
    <property type="match status" value="1"/>
</dbReference>
<dbReference type="InterPro" id="IPR027524">
    <property type="entry name" value="eIF3h"/>
</dbReference>
<dbReference type="InterPro" id="IPR045810">
    <property type="entry name" value="eIF3h_C"/>
</dbReference>
<dbReference type="InterPro" id="IPR000555">
    <property type="entry name" value="JAMM/MPN+_dom"/>
</dbReference>
<dbReference type="InterPro" id="IPR050242">
    <property type="entry name" value="JAMM_MPN+_peptidase_M67A"/>
</dbReference>
<dbReference type="InterPro" id="IPR037518">
    <property type="entry name" value="MPN"/>
</dbReference>
<dbReference type="PANTHER" id="PTHR10410">
    <property type="entry name" value="EUKARYOTIC TRANSLATION INITIATION FACTOR 3 -RELATED"/>
    <property type="match status" value="1"/>
</dbReference>
<dbReference type="Pfam" id="PF19445">
    <property type="entry name" value="eIF3h_C"/>
    <property type="match status" value="1"/>
</dbReference>
<dbReference type="Pfam" id="PF01398">
    <property type="entry name" value="JAB"/>
    <property type="match status" value="1"/>
</dbReference>
<dbReference type="SMART" id="SM00232">
    <property type="entry name" value="JAB_MPN"/>
    <property type="match status" value="1"/>
</dbReference>
<dbReference type="PROSITE" id="PS50249">
    <property type="entry name" value="MPN"/>
    <property type="match status" value="1"/>
</dbReference>